<sequence length="511" mass="58772">MRIIPRTMSTQHPDNAKVPEWAKSEVIEGEDEVKEAFLAYSMYGVHEVMWDAEGKDVDTHVVRKLLSNYPDYFREHILGKDLFLTYRLPNPKVEGADRKVFAETMESIPITYDLAEKFYGNGITIPVFEVILPMTTSSLEIISVARYYEKAVANEDELELYDGVKVKDLVGEIYPKVIEVIPLVEDRDSLQNINNIVEGYYKVIKPKYMRVFLARSDPAMNYGMITAVLSVKIALSELYKLSESLNFEIYPIIGVGSLPFRGHLSPENYEKVLEEYKGVYTYTIQSAFKYDYDYDKVKSAISSINNSRISPARILEKYEEDVLRKITILYTERYQPIIESLANAINDVSVLLPRRRARKLHIGLFGYSRSAGKVSLPRAISFVGSLYSIGIPPELIGISSLSNLDEKEWDIFKQNYVNFKHDLQTAARFLNWESFKLIKDIWKISEDTIAKIKEDIDYAESVIGIKLGGIDYDSRKHILMSSLFLLSFKEKILQESKKYLYEMALIRRSLG</sequence>
<proteinExistence type="evidence at protein level"/>
<accession>Q97WG4</accession>
<organism>
    <name type="scientific">Saccharolobus solfataricus (strain ATCC 35092 / DSM 1617 / JCM 11322 / P2)</name>
    <name type="common">Sulfolobus solfataricus</name>
    <dbReference type="NCBI Taxonomy" id="273057"/>
    <lineage>
        <taxon>Archaea</taxon>
        <taxon>Thermoproteota</taxon>
        <taxon>Thermoprotei</taxon>
        <taxon>Sulfolobales</taxon>
        <taxon>Sulfolobaceae</taxon>
        <taxon>Saccharolobus</taxon>
    </lineage>
</organism>
<gene>
    <name evidence="1" type="primary">ppcA</name>
    <name type="ordered locus">SSO2256</name>
</gene>
<keyword id="KW-0021">Allosteric enzyme</keyword>
<keyword id="KW-0120">Carbon dioxide fixation</keyword>
<keyword id="KW-0456">Lyase</keyword>
<keyword id="KW-0460">Magnesium</keyword>
<keyword id="KW-1185">Reference proteome</keyword>
<name>CAPPA_SACS2</name>
<evidence type="ECO:0000255" key="1">
    <source>
        <dbReference type="HAMAP-Rule" id="MF_01904"/>
    </source>
</evidence>
<evidence type="ECO:0000269" key="2">
    <source>
    </source>
</evidence>
<reference key="1">
    <citation type="journal article" date="2001" name="Proc. Natl. Acad. Sci. U.S.A.">
        <title>The complete genome of the crenarchaeon Sulfolobus solfataricus P2.</title>
        <authorList>
            <person name="She Q."/>
            <person name="Singh R.K."/>
            <person name="Confalonieri F."/>
            <person name="Zivanovic Y."/>
            <person name="Allard G."/>
            <person name="Awayez M.J."/>
            <person name="Chan-Weiher C.C.-Y."/>
            <person name="Clausen I.G."/>
            <person name="Curtis B.A."/>
            <person name="De Moors A."/>
            <person name="Erauso G."/>
            <person name="Fletcher C."/>
            <person name="Gordon P.M.K."/>
            <person name="Heikamp-de Jong I."/>
            <person name="Jeffries A.C."/>
            <person name="Kozera C.J."/>
            <person name="Medina N."/>
            <person name="Peng X."/>
            <person name="Thi-Ngoc H.P."/>
            <person name="Redder P."/>
            <person name="Schenk M.E."/>
            <person name="Theriault C."/>
            <person name="Tolstrup N."/>
            <person name="Charlebois R.L."/>
            <person name="Doolittle W.F."/>
            <person name="Duguet M."/>
            <person name="Gaasterland T."/>
            <person name="Garrett R.A."/>
            <person name="Ragan M.A."/>
            <person name="Sensen C.W."/>
            <person name="Van der Oost J."/>
        </authorList>
    </citation>
    <scope>NUCLEOTIDE SEQUENCE [LARGE SCALE GENOMIC DNA]</scope>
    <source>
        <strain>ATCC 35092 / DSM 1617 / JCM 11322 / P2</strain>
    </source>
</reference>
<reference key="2">
    <citation type="journal article" date="2004" name="J. Bacteriol.">
        <title>Identification and functional verification of archaeal-type phosphoenolpyruvate carboxylase, a missing link in archaeal central carbohydrate metabolism.</title>
        <authorList>
            <person name="Ettema T.J."/>
            <person name="Makarova K.S."/>
            <person name="Jellema G.L."/>
            <person name="Gierman H.J."/>
            <person name="Koonin E.V."/>
            <person name="Huynen M.A."/>
            <person name="de Vos W.M."/>
            <person name="van der Oost J."/>
        </authorList>
    </citation>
    <scope>FUNCTION</scope>
    <scope>CATALYTIC ACTIVITY</scope>
    <scope>COFACTOR</scope>
    <scope>ACTIVITY REGULATION</scope>
    <scope>BIOPHYSICOCHEMICAL PROPERTIES</scope>
    <source>
        <strain>ATCC 35092 / DSM 1617 / JCM 11322 / P2</strain>
    </source>
</reference>
<comment type="function">
    <text evidence="1 2">Catalyzes the irreversible beta-carboxylation of phosphoenolpyruvate (PEP) to form oxaloacetate (OAA), a four-carbon dicarboxylic acid source for the tricarboxylic acid cycle.</text>
</comment>
<comment type="catalytic activity">
    <reaction evidence="1 2">
        <text>oxaloacetate + phosphate = phosphoenolpyruvate + hydrogencarbonate</text>
        <dbReference type="Rhea" id="RHEA:28370"/>
        <dbReference type="ChEBI" id="CHEBI:16452"/>
        <dbReference type="ChEBI" id="CHEBI:17544"/>
        <dbReference type="ChEBI" id="CHEBI:43474"/>
        <dbReference type="ChEBI" id="CHEBI:58702"/>
        <dbReference type="EC" id="4.1.1.31"/>
    </reaction>
</comment>
<comment type="cofactor">
    <cofactor evidence="1 2">
        <name>Mg(2+)</name>
        <dbReference type="ChEBI" id="CHEBI:18420"/>
    </cofactor>
    <text evidence="1 2">Mg(2+) cannot be replaced by Mn(2+).</text>
</comment>
<comment type="activity regulation">
    <text evidence="2">Allosterically inhibited by L-aspartate and L-malate. PEPC activity is not affected by allosteric activators of E.coli PEPC such as glucose 6-phosphate, fructose 1,6-bisphosphate, and acetyl coenzyme A.</text>
</comment>
<comment type="biophysicochemical properties">
    <kinetics>
        <KM evidence="2">0.09 mM for phosphoenolpyruvate</KM>
    </kinetics>
    <phDependence>
        <text evidence="2">Optimum pH is 8.0.</text>
    </phDependence>
    <temperatureDependence>
        <text evidence="2">Optimum temperature is 85 degrees Celsius.</text>
    </temperatureDependence>
</comment>
<comment type="subunit">
    <text evidence="1">Homotetramer.</text>
</comment>
<comment type="similarity">
    <text evidence="1">Belongs to the PEPCase type 2 family.</text>
</comment>
<protein>
    <recommendedName>
        <fullName evidence="1">Phosphoenolpyruvate carboxylase</fullName>
        <shortName evidence="1">PEPC</shortName>
        <shortName evidence="1">PEPCase</shortName>
        <ecNumber evidence="1">4.1.1.31</ecNumber>
    </recommendedName>
</protein>
<dbReference type="EC" id="4.1.1.31" evidence="1"/>
<dbReference type="EMBL" id="AE006641">
    <property type="protein sequence ID" value="AAK42423.1"/>
    <property type="molecule type" value="Genomic_DNA"/>
</dbReference>
<dbReference type="PIR" id="H90395">
    <property type="entry name" value="H90395"/>
</dbReference>
<dbReference type="RefSeq" id="WP_009991534.1">
    <property type="nucleotide sequence ID" value="NC_002754.1"/>
</dbReference>
<dbReference type="SMR" id="Q97WG4"/>
<dbReference type="FunCoup" id="Q97WG4">
    <property type="interactions" value="129"/>
</dbReference>
<dbReference type="STRING" id="273057.SSO2256"/>
<dbReference type="PaxDb" id="273057-SSO2256"/>
<dbReference type="EnsemblBacteria" id="AAK42423">
    <property type="protein sequence ID" value="AAK42423"/>
    <property type="gene ID" value="SSO2256"/>
</dbReference>
<dbReference type="GeneID" id="44127989"/>
<dbReference type="KEGG" id="sso:SSO2256"/>
<dbReference type="PATRIC" id="fig|273057.12.peg.2350"/>
<dbReference type="eggNOG" id="arCOG04435">
    <property type="taxonomic scope" value="Archaea"/>
</dbReference>
<dbReference type="HOGENOM" id="CLU_517433_0_0_2"/>
<dbReference type="InParanoid" id="Q97WG4"/>
<dbReference type="PhylomeDB" id="Q97WG4"/>
<dbReference type="BRENDA" id="4.1.1.31">
    <property type="organism ID" value="6163"/>
</dbReference>
<dbReference type="Proteomes" id="UP000001974">
    <property type="component" value="Chromosome"/>
</dbReference>
<dbReference type="GO" id="GO:0000287">
    <property type="term" value="F:magnesium ion binding"/>
    <property type="evidence" value="ECO:0000314"/>
    <property type="project" value="UniProtKB"/>
</dbReference>
<dbReference type="GO" id="GO:0008964">
    <property type="term" value="F:phosphoenolpyruvate carboxylase activity"/>
    <property type="evidence" value="ECO:0000314"/>
    <property type="project" value="UniProtKB"/>
</dbReference>
<dbReference type="GO" id="GO:0015977">
    <property type="term" value="P:carbon fixation"/>
    <property type="evidence" value="ECO:0000314"/>
    <property type="project" value="UniProtKB"/>
</dbReference>
<dbReference type="GO" id="GO:0006107">
    <property type="term" value="P:oxaloacetate metabolic process"/>
    <property type="evidence" value="ECO:0000314"/>
    <property type="project" value="UniProtKB"/>
</dbReference>
<dbReference type="GO" id="GO:0006099">
    <property type="term" value="P:tricarboxylic acid cycle"/>
    <property type="evidence" value="ECO:0007669"/>
    <property type="project" value="InterPro"/>
</dbReference>
<dbReference type="HAMAP" id="MF_01904">
    <property type="entry name" value="PEPcase_type2"/>
    <property type="match status" value="1"/>
</dbReference>
<dbReference type="InterPro" id="IPR007566">
    <property type="entry name" value="PEP_COase_arc-type"/>
</dbReference>
<dbReference type="InterPro" id="IPR015813">
    <property type="entry name" value="Pyrv/PenolPyrv_kinase-like_dom"/>
</dbReference>
<dbReference type="NCBIfam" id="TIGR02751">
    <property type="entry name" value="PEPCase_arch"/>
    <property type="match status" value="1"/>
</dbReference>
<dbReference type="Pfam" id="PF14010">
    <property type="entry name" value="PEPcase_2"/>
    <property type="match status" value="1"/>
</dbReference>
<dbReference type="PIRSF" id="PIRSF006677">
    <property type="entry name" value="UCP006677"/>
    <property type="match status" value="1"/>
</dbReference>
<dbReference type="SUPFAM" id="SSF51621">
    <property type="entry name" value="Phosphoenolpyruvate/pyruvate domain"/>
    <property type="match status" value="1"/>
</dbReference>
<feature type="chain" id="PRO_0000309615" description="Phosphoenolpyruvate carboxylase">
    <location>
        <begin position="1"/>
        <end position="511"/>
    </location>
</feature>